<name>Y713_STRPF</name>
<proteinExistence type="inferred from homology"/>
<dbReference type="EMBL" id="CP000262">
    <property type="protein sequence ID" value="ABF37663.1"/>
    <property type="molecule type" value="Genomic_DNA"/>
</dbReference>
<dbReference type="SMR" id="Q1J7B1"/>
<dbReference type="KEGG" id="spi:MGAS10750_Spy0713"/>
<dbReference type="HOGENOM" id="CLU_140243_2_0_9"/>
<dbReference type="Proteomes" id="UP000002434">
    <property type="component" value="Chromosome"/>
</dbReference>
<dbReference type="Gene3D" id="1.20.1500.10">
    <property type="entry name" value="YheA/YmcA-like"/>
    <property type="match status" value="1"/>
</dbReference>
<dbReference type="HAMAP" id="MF_01526">
    <property type="entry name" value="UPF0342"/>
    <property type="match status" value="1"/>
</dbReference>
<dbReference type="InterPro" id="IPR010368">
    <property type="entry name" value="Com_YlbF"/>
</dbReference>
<dbReference type="InterPro" id="IPR023378">
    <property type="entry name" value="YheA/YmcA-like_dom_sf"/>
</dbReference>
<dbReference type="NCBIfam" id="NF010209">
    <property type="entry name" value="PRK13676.1-1"/>
    <property type="match status" value="1"/>
</dbReference>
<dbReference type="Pfam" id="PF06133">
    <property type="entry name" value="Com_YlbF"/>
    <property type="match status" value="1"/>
</dbReference>
<dbReference type="SUPFAM" id="SSF158622">
    <property type="entry name" value="YheA/YmcA-like"/>
    <property type="match status" value="1"/>
</dbReference>
<gene>
    <name type="ordered locus">MGAS10750_Spy0713</name>
</gene>
<protein>
    <recommendedName>
        <fullName evidence="1">UPF0342 protein MGAS10750_Spy0713</fullName>
    </recommendedName>
</protein>
<comment type="similarity">
    <text evidence="1">Belongs to the UPF0342 family.</text>
</comment>
<feature type="chain" id="PRO_0000292751" description="UPF0342 protein MGAS10750_Spy0713">
    <location>
        <begin position="1"/>
        <end position="113"/>
    </location>
</feature>
<evidence type="ECO:0000255" key="1">
    <source>
        <dbReference type="HAMAP-Rule" id="MF_01526"/>
    </source>
</evidence>
<sequence length="113" mass="12972">MSQEIYDYANQLERAVRALPEYQKVLEVKEAIQADASASELFDEFVAMQEKIQEMMQSGQMPTAEEQTSIQELSQKIEANDQLKAYFEAQQALSVYMSDIERIVFAPLKDLVK</sequence>
<organism>
    <name type="scientific">Streptococcus pyogenes serotype M4 (strain MGAS10750)</name>
    <dbReference type="NCBI Taxonomy" id="370554"/>
    <lineage>
        <taxon>Bacteria</taxon>
        <taxon>Bacillati</taxon>
        <taxon>Bacillota</taxon>
        <taxon>Bacilli</taxon>
        <taxon>Lactobacillales</taxon>
        <taxon>Streptococcaceae</taxon>
        <taxon>Streptococcus</taxon>
    </lineage>
</organism>
<reference key="1">
    <citation type="journal article" date="2006" name="Proc. Natl. Acad. Sci. U.S.A.">
        <title>Molecular genetic anatomy of inter- and intraserotype variation in the human bacterial pathogen group A Streptococcus.</title>
        <authorList>
            <person name="Beres S.B."/>
            <person name="Richter E.W."/>
            <person name="Nagiec M.J."/>
            <person name="Sumby P."/>
            <person name="Porcella S.F."/>
            <person name="DeLeo F.R."/>
            <person name="Musser J.M."/>
        </authorList>
    </citation>
    <scope>NUCLEOTIDE SEQUENCE [LARGE SCALE GENOMIC DNA]</scope>
    <source>
        <strain>MGAS10750</strain>
    </source>
</reference>
<accession>Q1J7B1</accession>